<protein>
    <recommendedName>
        <fullName evidence="1">Large ribosomal subunit protein bL17</fullName>
    </recommendedName>
    <alternativeName>
        <fullName evidence="2">50S ribosomal protein L17</fullName>
    </alternativeName>
</protein>
<name>RL17_STAAS</name>
<feature type="chain" id="PRO_0000224141" description="Large ribosomal subunit protein bL17">
    <location>
        <begin position="1"/>
        <end position="122"/>
    </location>
</feature>
<proteinExistence type="inferred from homology"/>
<evidence type="ECO:0000255" key="1">
    <source>
        <dbReference type="HAMAP-Rule" id="MF_01368"/>
    </source>
</evidence>
<evidence type="ECO:0000305" key="2"/>
<comment type="subunit">
    <text evidence="1">Part of the 50S ribosomal subunit. Contacts protein L32.</text>
</comment>
<comment type="similarity">
    <text evidence="1">Belongs to the bacterial ribosomal protein bL17 family.</text>
</comment>
<dbReference type="EMBL" id="BX571857">
    <property type="protein sequence ID" value="CAG43925.1"/>
    <property type="molecule type" value="Genomic_DNA"/>
</dbReference>
<dbReference type="RefSeq" id="WP_000542274.1">
    <property type="nucleotide sequence ID" value="NC_002953.3"/>
</dbReference>
<dbReference type="SMR" id="Q6G798"/>
<dbReference type="GeneID" id="98346535"/>
<dbReference type="KEGG" id="sas:SAS2114"/>
<dbReference type="HOGENOM" id="CLU_074407_2_2_9"/>
<dbReference type="GO" id="GO:0022625">
    <property type="term" value="C:cytosolic large ribosomal subunit"/>
    <property type="evidence" value="ECO:0007669"/>
    <property type="project" value="TreeGrafter"/>
</dbReference>
<dbReference type="GO" id="GO:0003735">
    <property type="term" value="F:structural constituent of ribosome"/>
    <property type="evidence" value="ECO:0007669"/>
    <property type="project" value="InterPro"/>
</dbReference>
<dbReference type="GO" id="GO:0006412">
    <property type="term" value="P:translation"/>
    <property type="evidence" value="ECO:0007669"/>
    <property type="project" value="UniProtKB-UniRule"/>
</dbReference>
<dbReference type="FunFam" id="3.90.1030.10:FF:000002">
    <property type="entry name" value="50S ribosomal protein L17"/>
    <property type="match status" value="1"/>
</dbReference>
<dbReference type="Gene3D" id="3.90.1030.10">
    <property type="entry name" value="Ribosomal protein L17"/>
    <property type="match status" value="1"/>
</dbReference>
<dbReference type="HAMAP" id="MF_01368">
    <property type="entry name" value="Ribosomal_bL17"/>
    <property type="match status" value="1"/>
</dbReference>
<dbReference type="InterPro" id="IPR000456">
    <property type="entry name" value="Ribosomal_bL17"/>
</dbReference>
<dbReference type="InterPro" id="IPR047859">
    <property type="entry name" value="Ribosomal_bL17_CS"/>
</dbReference>
<dbReference type="InterPro" id="IPR036373">
    <property type="entry name" value="Ribosomal_bL17_sf"/>
</dbReference>
<dbReference type="NCBIfam" id="TIGR00059">
    <property type="entry name" value="L17"/>
    <property type="match status" value="1"/>
</dbReference>
<dbReference type="PANTHER" id="PTHR14413:SF16">
    <property type="entry name" value="LARGE RIBOSOMAL SUBUNIT PROTEIN BL17M"/>
    <property type="match status" value="1"/>
</dbReference>
<dbReference type="PANTHER" id="PTHR14413">
    <property type="entry name" value="RIBOSOMAL PROTEIN L17"/>
    <property type="match status" value="1"/>
</dbReference>
<dbReference type="Pfam" id="PF01196">
    <property type="entry name" value="Ribosomal_L17"/>
    <property type="match status" value="1"/>
</dbReference>
<dbReference type="SUPFAM" id="SSF64263">
    <property type="entry name" value="Prokaryotic ribosomal protein L17"/>
    <property type="match status" value="1"/>
</dbReference>
<dbReference type="PROSITE" id="PS01167">
    <property type="entry name" value="RIBOSOMAL_L17"/>
    <property type="match status" value="1"/>
</dbReference>
<reference key="1">
    <citation type="journal article" date="2004" name="Proc. Natl. Acad. Sci. U.S.A.">
        <title>Complete genomes of two clinical Staphylococcus aureus strains: evidence for the rapid evolution of virulence and drug resistance.</title>
        <authorList>
            <person name="Holden M.T.G."/>
            <person name="Feil E.J."/>
            <person name="Lindsay J.A."/>
            <person name="Peacock S.J."/>
            <person name="Day N.P.J."/>
            <person name="Enright M.C."/>
            <person name="Foster T.J."/>
            <person name="Moore C.E."/>
            <person name="Hurst L."/>
            <person name="Atkin R."/>
            <person name="Barron A."/>
            <person name="Bason N."/>
            <person name="Bentley S.D."/>
            <person name="Chillingworth C."/>
            <person name="Chillingworth T."/>
            <person name="Churcher C."/>
            <person name="Clark L."/>
            <person name="Corton C."/>
            <person name="Cronin A."/>
            <person name="Doggett J."/>
            <person name="Dowd L."/>
            <person name="Feltwell T."/>
            <person name="Hance Z."/>
            <person name="Harris B."/>
            <person name="Hauser H."/>
            <person name="Holroyd S."/>
            <person name="Jagels K."/>
            <person name="James K.D."/>
            <person name="Lennard N."/>
            <person name="Line A."/>
            <person name="Mayes R."/>
            <person name="Moule S."/>
            <person name="Mungall K."/>
            <person name="Ormond D."/>
            <person name="Quail M.A."/>
            <person name="Rabbinowitsch E."/>
            <person name="Rutherford K.M."/>
            <person name="Sanders M."/>
            <person name="Sharp S."/>
            <person name="Simmonds M."/>
            <person name="Stevens K."/>
            <person name="Whitehead S."/>
            <person name="Barrell B.G."/>
            <person name="Spratt B.G."/>
            <person name="Parkhill J."/>
        </authorList>
    </citation>
    <scope>NUCLEOTIDE SEQUENCE [LARGE SCALE GENOMIC DNA]</scope>
    <source>
        <strain>MSSA476</strain>
    </source>
</reference>
<accession>Q6G798</accession>
<sequence length="122" mass="13748">MGYRKLGRTSDQRKAMLRDLATSLIISERIETTEARAKEVRSVVEKLITLGKKGDLASRRNAAKTLRNVEILNEDETTQTALQKLFGEIAERYTERQGGYTRILKQGPRRGDGAESVIIELV</sequence>
<gene>
    <name evidence="1" type="primary">rplQ</name>
    <name type="ordered locus">SAS2114</name>
</gene>
<organism>
    <name type="scientific">Staphylococcus aureus (strain MSSA476)</name>
    <dbReference type="NCBI Taxonomy" id="282459"/>
    <lineage>
        <taxon>Bacteria</taxon>
        <taxon>Bacillati</taxon>
        <taxon>Bacillota</taxon>
        <taxon>Bacilli</taxon>
        <taxon>Bacillales</taxon>
        <taxon>Staphylococcaceae</taxon>
        <taxon>Staphylococcus</taxon>
    </lineage>
</organism>
<keyword id="KW-0687">Ribonucleoprotein</keyword>
<keyword id="KW-0689">Ribosomal protein</keyword>